<feature type="chain" id="PRO_1000097613" description="3-dehydroquinate dehydratase">
    <location>
        <begin position="1"/>
        <end position="149"/>
    </location>
</feature>
<feature type="active site" description="Proton acceptor" evidence="1">
    <location>
        <position position="26"/>
    </location>
</feature>
<feature type="active site" description="Proton donor" evidence="1">
    <location>
        <position position="104"/>
    </location>
</feature>
<feature type="binding site" evidence="1">
    <location>
        <position position="78"/>
    </location>
    <ligand>
        <name>substrate</name>
    </ligand>
</feature>
<feature type="binding site" evidence="1">
    <location>
        <position position="84"/>
    </location>
    <ligand>
        <name>substrate</name>
    </ligand>
</feature>
<feature type="binding site" evidence="1">
    <location>
        <position position="91"/>
    </location>
    <ligand>
        <name>substrate</name>
    </ligand>
</feature>
<feature type="binding site" evidence="1">
    <location>
        <begin position="105"/>
        <end position="106"/>
    </location>
    <ligand>
        <name>substrate</name>
    </ligand>
</feature>
<feature type="binding site" evidence="1">
    <location>
        <position position="115"/>
    </location>
    <ligand>
        <name>substrate</name>
    </ligand>
</feature>
<feature type="site" description="Transition state stabilizer" evidence="1">
    <location>
        <position position="21"/>
    </location>
</feature>
<sequence length="149" mass="16254">MSKKASILVIQGPNLNLLGSRESDVYGKTTLEDIHQKLGELATAQSVDLSTYQSNHEGELIDRIQKAKQDGVDFIIINPGAFTHTSVALRDVLAGVAIPFTEVHLSNIHQREEFRKHSYLSDIATGVICGLGAIGYELALQAAITRIKK</sequence>
<accession>B1XT51</accession>
<protein>
    <recommendedName>
        <fullName evidence="1">3-dehydroquinate dehydratase</fullName>
        <shortName evidence="1">3-dehydroquinase</shortName>
        <ecNumber evidence="1">4.2.1.10</ecNumber>
    </recommendedName>
    <alternativeName>
        <fullName evidence="1">Type II DHQase</fullName>
    </alternativeName>
</protein>
<reference key="1">
    <citation type="journal article" date="2013" name="Proc. Natl. Acad. Sci. U.S.A.">
        <title>Polynucleobacter necessarius, a model for genome reduction in both free-living and symbiotic bacteria.</title>
        <authorList>
            <person name="Boscaro V."/>
            <person name="Felletti M."/>
            <person name="Vannini C."/>
            <person name="Ackerman M.S."/>
            <person name="Chain P.S."/>
            <person name="Malfatti S."/>
            <person name="Vergez L.M."/>
            <person name="Shin M."/>
            <person name="Doak T.G."/>
            <person name="Lynch M."/>
            <person name="Petroni G."/>
        </authorList>
    </citation>
    <scope>NUCLEOTIDE SEQUENCE [LARGE SCALE GENOMIC DNA]</scope>
    <source>
        <strain>STIR1</strain>
    </source>
</reference>
<evidence type="ECO:0000255" key="1">
    <source>
        <dbReference type="HAMAP-Rule" id="MF_00169"/>
    </source>
</evidence>
<dbReference type="EC" id="4.2.1.10" evidence="1"/>
<dbReference type="EMBL" id="CP001010">
    <property type="protein sequence ID" value="ACB43528.1"/>
    <property type="molecule type" value="Genomic_DNA"/>
</dbReference>
<dbReference type="SMR" id="B1XT51"/>
<dbReference type="STRING" id="452638.Pnec_0231"/>
<dbReference type="KEGG" id="pne:Pnec_0231"/>
<dbReference type="eggNOG" id="COG0757">
    <property type="taxonomic scope" value="Bacteria"/>
</dbReference>
<dbReference type="HOGENOM" id="CLU_090968_1_0_4"/>
<dbReference type="OrthoDB" id="9790793at2"/>
<dbReference type="UniPathway" id="UPA00053">
    <property type="reaction ID" value="UER00086"/>
</dbReference>
<dbReference type="GO" id="GO:0003855">
    <property type="term" value="F:3-dehydroquinate dehydratase activity"/>
    <property type="evidence" value="ECO:0007669"/>
    <property type="project" value="UniProtKB-UniRule"/>
</dbReference>
<dbReference type="GO" id="GO:0008652">
    <property type="term" value="P:amino acid biosynthetic process"/>
    <property type="evidence" value="ECO:0007669"/>
    <property type="project" value="UniProtKB-KW"/>
</dbReference>
<dbReference type="GO" id="GO:0009073">
    <property type="term" value="P:aromatic amino acid family biosynthetic process"/>
    <property type="evidence" value="ECO:0007669"/>
    <property type="project" value="UniProtKB-KW"/>
</dbReference>
<dbReference type="GO" id="GO:0009423">
    <property type="term" value="P:chorismate biosynthetic process"/>
    <property type="evidence" value="ECO:0007669"/>
    <property type="project" value="UniProtKB-UniRule"/>
</dbReference>
<dbReference type="GO" id="GO:0019631">
    <property type="term" value="P:quinate catabolic process"/>
    <property type="evidence" value="ECO:0007669"/>
    <property type="project" value="TreeGrafter"/>
</dbReference>
<dbReference type="CDD" id="cd00466">
    <property type="entry name" value="DHQase_II"/>
    <property type="match status" value="1"/>
</dbReference>
<dbReference type="Gene3D" id="3.40.50.9100">
    <property type="entry name" value="Dehydroquinase, class II"/>
    <property type="match status" value="1"/>
</dbReference>
<dbReference type="HAMAP" id="MF_00169">
    <property type="entry name" value="AroQ"/>
    <property type="match status" value="1"/>
</dbReference>
<dbReference type="InterPro" id="IPR001874">
    <property type="entry name" value="DHquinase_II"/>
</dbReference>
<dbReference type="InterPro" id="IPR018509">
    <property type="entry name" value="DHquinase_II_CS"/>
</dbReference>
<dbReference type="InterPro" id="IPR036441">
    <property type="entry name" value="DHquinase_II_sf"/>
</dbReference>
<dbReference type="NCBIfam" id="TIGR01088">
    <property type="entry name" value="aroQ"/>
    <property type="match status" value="1"/>
</dbReference>
<dbReference type="NCBIfam" id="NF003804">
    <property type="entry name" value="PRK05395.1-1"/>
    <property type="match status" value="1"/>
</dbReference>
<dbReference type="NCBIfam" id="NF003805">
    <property type="entry name" value="PRK05395.1-2"/>
    <property type="match status" value="1"/>
</dbReference>
<dbReference type="NCBIfam" id="NF003806">
    <property type="entry name" value="PRK05395.1-3"/>
    <property type="match status" value="1"/>
</dbReference>
<dbReference type="NCBIfam" id="NF003807">
    <property type="entry name" value="PRK05395.1-4"/>
    <property type="match status" value="1"/>
</dbReference>
<dbReference type="PANTHER" id="PTHR21272">
    <property type="entry name" value="CATABOLIC 3-DEHYDROQUINASE"/>
    <property type="match status" value="1"/>
</dbReference>
<dbReference type="PANTHER" id="PTHR21272:SF3">
    <property type="entry name" value="CATABOLIC 3-DEHYDROQUINASE"/>
    <property type="match status" value="1"/>
</dbReference>
<dbReference type="Pfam" id="PF01220">
    <property type="entry name" value="DHquinase_II"/>
    <property type="match status" value="1"/>
</dbReference>
<dbReference type="PIRSF" id="PIRSF001399">
    <property type="entry name" value="DHquinase_II"/>
    <property type="match status" value="1"/>
</dbReference>
<dbReference type="SUPFAM" id="SSF52304">
    <property type="entry name" value="Type II 3-dehydroquinate dehydratase"/>
    <property type="match status" value="1"/>
</dbReference>
<dbReference type="PROSITE" id="PS01029">
    <property type="entry name" value="DEHYDROQUINASE_II"/>
    <property type="match status" value="1"/>
</dbReference>
<name>AROQ_POLNS</name>
<proteinExistence type="inferred from homology"/>
<gene>
    <name evidence="1" type="primary">aroQ</name>
    <name type="ordered locus">Pnec_0231</name>
</gene>
<organism>
    <name type="scientific">Polynucleobacter necessarius subsp. necessarius (strain STIR1)</name>
    <dbReference type="NCBI Taxonomy" id="452638"/>
    <lineage>
        <taxon>Bacteria</taxon>
        <taxon>Pseudomonadati</taxon>
        <taxon>Pseudomonadota</taxon>
        <taxon>Betaproteobacteria</taxon>
        <taxon>Burkholderiales</taxon>
        <taxon>Burkholderiaceae</taxon>
        <taxon>Polynucleobacter</taxon>
    </lineage>
</organism>
<keyword id="KW-0028">Amino-acid biosynthesis</keyword>
<keyword id="KW-0057">Aromatic amino acid biosynthesis</keyword>
<keyword id="KW-0456">Lyase</keyword>
<comment type="function">
    <text evidence="1">Catalyzes a trans-dehydration via an enolate intermediate.</text>
</comment>
<comment type="catalytic activity">
    <reaction evidence="1">
        <text>3-dehydroquinate = 3-dehydroshikimate + H2O</text>
        <dbReference type="Rhea" id="RHEA:21096"/>
        <dbReference type="ChEBI" id="CHEBI:15377"/>
        <dbReference type="ChEBI" id="CHEBI:16630"/>
        <dbReference type="ChEBI" id="CHEBI:32364"/>
        <dbReference type="EC" id="4.2.1.10"/>
    </reaction>
</comment>
<comment type="pathway">
    <text evidence="1">Metabolic intermediate biosynthesis; chorismate biosynthesis; chorismate from D-erythrose 4-phosphate and phosphoenolpyruvate: step 3/7.</text>
</comment>
<comment type="subunit">
    <text evidence="1">Homododecamer.</text>
</comment>
<comment type="similarity">
    <text evidence="1">Belongs to the type-II 3-dehydroquinase family.</text>
</comment>